<reference key="1">
    <citation type="journal article" date="2006" name="Mol. Phylogenet. Evol.">
        <title>Molecular systematics of Vampyressine bats (Phyllostomidae: Stenodermatinae) with comparison of direct and indirect surveys of mitochondrial DNA variation.</title>
        <authorList>
            <person name="Hoofer S.R."/>
            <person name="Baker R.J."/>
        </authorList>
    </citation>
    <scope>NUCLEOTIDE SEQUENCE [GENOMIC DNA]</scope>
    <source>
        <strain>Isolate TK 135727</strain>
        <strain>Isolate TK 135728</strain>
        <strain>Isolate TK 135843</strain>
    </source>
</reference>
<organism>
    <name type="scientific">Vampyriscus nymphaeus</name>
    <name type="common">Striped yellow-eared bat</name>
    <name type="synonym">Vampyressa nymphaea</name>
    <dbReference type="NCBI Taxonomy" id="3370950"/>
    <lineage>
        <taxon>Eukaryota</taxon>
        <taxon>Metazoa</taxon>
        <taxon>Chordata</taxon>
        <taxon>Craniata</taxon>
        <taxon>Vertebrata</taxon>
        <taxon>Euteleostomi</taxon>
        <taxon>Mammalia</taxon>
        <taxon>Eutheria</taxon>
        <taxon>Laurasiatheria</taxon>
        <taxon>Chiroptera</taxon>
        <taxon>Yangochiroptera</taxon>
        <taxon>Phyllostomidae</taxon>
        <taxon>Stenodermatinae</taxon>
        <taxon>Vampyressa</taxon>
    </lineage>
</organism>
<feature type="chain" id="PRO_0000275145" description="NADH-ubiquinone oxidoreductase chain 4L">
    <location>
        <begin position="1"/>
        <end position="98"/>
    </location>
</feature>
<feature type="transmembrane region" description="Helical" evidence="3">
    <location>
        <begin position="1"/>
        <end position="21"/>
    </location>
</feature>
<feature type="transmembrane region" description="Helical" evidence="3">
    <location>
        <begin position="29"/>
        <end position="49"/>
    </location>
</feature>
<feature type="transmembrane region" description="Helical" evidence="3">
    <location>
        <begin position="61"/>
        <end position="81"/>
    </location>
</feature>
<feature type="sequence variant" description="In strain: Isolate TK 135728.">
    <original>L</original>
    <variation>I</variation>
    <location>
        <position position="3"/>
    </location>
</feature>
<gene>
    <name type="primary">MT-ND4L</name>
    <name type="synonym">MTND4L</name>
    <name type="synonym">NADH4L</name>
    <name type="synonym">ND4L</name>
</gene>
<keyword id="KW-0249">Electron transport</keyword>
<keyword id="KW-0472">Membrane</keyword>
<keyword id="KW-0496">Mitochondrion</keyword>
<keyword id="KW-0999">Mitochondrion inner membrane</keyword>
<keyword id="KW-0520">NAD</keyword>
<keyword id="KW-0679">Respiratory chain</keyword>
<keyword id="KW-1278">Translocase</keyword>
<keyword id="KW-0812">Transmembrane</keyword>
<keyword id="KW-1133">Transmembrane helix</keyword>
<keyword id="KW-0813">Transport</keyword>
<keyword id="KW-0830">Ubiquinone</keyword>
<protein>
    <recommendedName>
        <fullName>NADH-ubiquinone oxidoreductase chain 4L</fullName>
        <ecNumber>7.1.1.2</ecNumber>
    </recommendedName>
    <alternativeName>
        <fullName>NADH dehydrogenase subunit 4L</fullName>
    </alternativeName>
</protein>
<name>NU4LM_VAMNY</name>
<geneLocation type="mitochondrion"/>
<comment type="function">
    <text evidence="1">Core subunit of the mitochondrial membrane respiratory chain NADH dehydrogenase (Complex I) which catalyzes electron transfer from NADH through the respiratory chain, using ubiquinone as an electron acceptor. Part of the enzyme membrane arm which is embedded in the lipid bilayer and involved in proton translocation.</text>
</comment>
<comment type="catalytic activity">
    <reaction evidence="1">
        <text>a ubiquinone + NADH + 5 H(+)(in) = a ubiquinol + NAD(+) + 4 H(+)(out)</text>
        <dbReference type="Rhea" id="RHEA:29091"/>
        <dbReference type="Rhea" id="RHEA-COMP:9565"/>
        <dbReference type="Rhea" id="RHEA-COMP:9566"/>
        <dbReference type="ChEBI" id="CHEBI:15378"/>
        <dbReference type="ChEBI" id="CHEBI:16389"/>
        <dbReference type="ChEBI" id="CHEBI:17976"/>
        <dbReference type="ChEBI" id="CHEBI:57540"/>
        <dbReference type="ChEBI" id="CHEBI:57945"/>
        <dbReference type="EC" id="7.1.1.2"/>
    </reaction>
    <physiologicalReaction direction="left-to-right" evidence="1">
        <dbReference type="Rhea" id="RHEA:29092"/>
    </physiologicalReaction>
</comment>
<comment type="subunit">
    <text evidence="2">Core subunit of respiratory chain NADH dehydrogenase (Complex I) which is composed of 45 different subunits.</text>
</comment>
<comment type="subcellular location">
    <subcellularLocation>
        <location evidence="2">Mitochondrion inner membrane</location>
        <topology evidence="3">Multi-pass membrane protein</topology>
    </subcellularLocation>
</comment>
<comment type="similarity">
    <text evidence="4">Belongs to the complex I subunit 4L family.</text>
</comment>
<evidence type="ECO:0000250" key="1">
    <source>
        <dbReference type="UniProtKB" id="P03901"/>
    </source>
</evidence>
<evidence type="ECO:0000250" key="2">
    <source>
        <dbReference type="UniProtKB" id="P03902"/>
    </source>
</evidence>
<evidence type="ECO:0000255" key="3"/>
<evidence type="ECO:0000305" key="4"/>
<dbReference type="EC" id="7.1.1.2"/>
<dbReference type="EMBL" id="DQ312375">
    <property type="protein sequence ID" value="ABC47541.1"/>
    <property type="molecule type" value="Genomic_DNA"/>
</dbReference>
<dbReference type="EMBL" id="DQ312376">
    <property type="protein sequence ID" value="ABC47544.1"/>
    <property type="molecule type" value="Genomic_DNA"/>
</dbReference>
<dbReference type="EMBL" id="DQ312377">
    <property type="protein sequence ID" value="ABC47547.1"/>
    <property type="molecule type" value="Genomic_DNA"/>
</dbReference>
<dbReference type="SMR" id="Q1HV14"/>
<dbReference type="GO" id="GO:0005743">
    <property type="term" value="C:mitochondrial inner membrane"/>
    <property type="evidence" value="ECO:0000250"/>
    <property type="project" value="UniProtKB"/>
</dbReference>
<dbReference type="GO" id="GO:0045271">
    <property type="term" value="C:respiratory chain complex I"/>
    <property type="evidence" value="ECO:0000250"/>
    <property type="project" value="UniProtKB"/>
</dbReference>
<dbReference type="GO" id="GO:0008137">
    <property type="term" value="F:NADH dehydrogenase (ubiquinone) activity"/>
    <property type="evidence" value="ECO:0000250"/>
    <property type="project" value="UniProtKB"/>
</dbReference>
<dbReference type="GO" id="GO:0042773">
    <property type="term" value="P:ATP synthesis coupled electron transport"/>
    <property type="evidence" value="ECO:0007669"/>
    <property type="project" value="InterPro"/>
</dbReference>
<dbReference type="FunFam" id="1.10.287.3510:FF:000002">
    <property type="entry name" value="NADH-ubiquinone oxidoreductase chain 4L"/>
    <property type="match status" value="1"/>
</dbReference>
<dbReference type="Gene3D" id="1.10.287.3510">
    <property type="match status" value="1"/>
</dbReference>
<dbReference type="InterPro" id="IPR001133">
    <property type="entry name" value="NADH_UbQ_OxRdtase_chain4L/K"/>
</dbReference>
<dbReference type="InterPro" id="IPR039428">
    <property type="entry name" value="NUOK/Mnh_C1-like"/>
</dbReference>
<dbReference type="PANTHER" id="PTHR11434:SF0">
    <property type="entry name" value="NADH-UBIQUINONE OXIDOREDUCTASE CHAIN 4L"/>
    <property type="match status" value="1"/>
</dbReference>
<dbReference type="PANTHER" id="PTHR11434">
    <property type="entry name" value="NADH-UBIQUINONE OXIDOREDUCTASE SUBUNIT ND4L"/>
    <property type="match status" value="1"/>
</dbReference>
<dbReference type="Pfam" id="PF00420">
    <property type="entry name" value="Oxidored_q2"/>
    <property type="match status" value="1"/>
</dbReference>
<sequence length="98" mass="10933">MSLTYMNMFMAFTISLLGLLMYRAHMMSSLLCLEGMMLSLFVMMTMTILNTHLTLASMIPIILLVFAACEAALGLSLLVMVSTTYGMDYVQNLNLLQC</sequence>
<accession>Q1HV14</accession>
<accession>Q1HV20</accession>
<proteinExistence type="inferred from homology"/>